<protein>
    <recommendedName>
        <fullName evidence="7">Type-2 ice-structuring protein</fullName>
    </recommendedName>
    <alternativeName>
        <fullName evidence="6 9">Type II antifreeze protein</fullName>
    </alternativeName>
    <alternativeName>
        <fullName evidence="6">lpAFP</fullName>
    </alternativeName>
</protein>
<name>ISP2_BRASG</name>
<organism>
    <name type="scientific">Brachyopsis segaliensis</name>
    <name type="common">Sea poacher</name>
    <name type="synonym">Brachyopsis rostratus</name>
    <dbReference type="NCBI Taxonomy" id="1633465"/>
    <lineage>
        <taxon>Eukaryota</taxon>
        <taxon>Metazoa</taxon>
        <taxon>Chordata</taxon>
        <taxon>Craniata</taxon>
        <taxon>Vertebrata</taxon>
        <taxon>Euteleostomi</taxon>
        <taxon>Actinopterygii</taxon>
        <taxon>Neopterygii</taxon>
        <taxon>Teleostei</taxon>
        <taxon>Neoteleostei</taxon>
        <taxon>Acanthomorphata</taxon>
        <taxon>Eupercaria</taxon>
        <taxon>Perciformes</taxon>
        <taxon>Cottioidei</taxon>
        <taxon>Cottales</taxon>
        <taxon>Agonidae</taxon>
        <taxon>Brachyopsinae</taxon>
        <taxon>Brachyopsis</taxon>
    </lineage>
</organism>
<reference evidence="9" key="1">
    <citation type="journal article" date="2006" name="Acta Crystallogr. F Struct. Biol. Commun.">
        <title>Crystallization and preliminary X-ray crystallographic analysis of Ca2+-independent and Ca2+-dependent species of the type II antifreeze protein.</title>
        <authorList>
            <person name="Nishimiya Y."/>
            <person name="Kondo H."/>
            <person name="Yasui M."/>
            <person name="Sugimoto H."/>
            <person name="Noro N."/>
            <person name="Sato R."/>
            <person name="Suzuki M."/>
            <person name="Miura A."/>
            <person name="Tsuda S."/>
        </authorList>
    </citation>
    <scope>NUCLEOTIDE SEQUENCE [MRNA]</scope>
    <scope>CRYSTALLIZATION</scope>
    <scope>SUBCELLULAR LOCATION</scope>
</reference>
<reference evidence="10" key="2">
    <citation type="journal article" date="2008" name="J. Mol. Biol.">
        <title>Crystal structure and mutational analysis of Ca2+-independent type II antifreeze protein from longsnout poacher, Brachyopsis rostratus.</title>
        <authorList>
            <person name="Nishimiya Y."/>
            <person name="Kondo H."/>
            <person name="Takamichi M."/>
            <person name="Sugimoto H."/>
            <person name="Suzuki M."/>
            <person name="Miura A."/>
            <person name="Tsuda S."/>
        </authorList>
    </citation>
    <scope>X-RAY CRYSTALLOGRAPHY (1.34 ANGSTROMS) OF 42-168</scope>
    <scope>FUNCTION</scope>
    <scope>DISULFIDE BONDS</scope>
    <scope>MUTAGENESIS OF ILE-99; ALA-112 AND LEU-153</scope>
</reference>
<proteinExistence type="evidence at protein level"/>
<accession>A0ZT93</accession>
<dbReference type="EMBL" id="AB283044">
    <property type="protein sequence ID" value="BAF37106.1"/>
    <property type="molecule type" value="mRNA"/>
</dbReference>
<dbReference type="PDB" id="2ZIB">
    <property type="method" value="X-ray"/>
    <property type="resolution" value="1.34 A"/>
    <property type="chains" value="A=42-168"/>
</dbReference>
<dbReference type="PDBsum" id="2ZIB"/>
<dbReference type="SMR" id="A0ZT93"/>
<dbReference type="EvolutionaryTrace" id="A0ZT93"/>
<dbReference type="GO" id="GO:0005576">
    <property type="term" value="C:extracellular region"/>
    <property type="evidence" value="ECO:0007669"/>
    <property type="project" value="UniProtKB-SubCell"/>
</dbReference>
<dbReference type="GO" id="GO:0030246">
    <property type="term" value="F:carbohydrate binding"/>
    <property type="evidence" value="ECO:0007669"/>
    <property type="project" value="UniProtKB-KW"/>
</dbReference>
<dbReference type="CDD" id="cd00037">
    <property type="entry name" value="CLECT"/>
    <property type="match status" value="1"/>
</dbReference>
<dbReference type="Gene3D" id="3.10.100.10">
    <property type="entry name" value="Mannose-Binding Protein A, subunit A"/>
    <property type="match status" value="1"/>
</dbReference>
<dbReference type="InterPro" id="IPR002353">
    <property type="entry name" value="AntifreezeII"/>
</dbReference>
<dbReference type="InterPro" id="IPR001304">
    <property type="entry name" value="C-type_lectin-like"/>
</dbReference>
<dbReference type="InterPro" id="IPR016186">
    <property type="entry name" value="C-type_lectin-like/link_sf"/>
</dbReference>
<dbReference type="InterPro" id="IPR050111">
    <property type="entry name" value="C-type_lectin/snaclec_domain"/>
</dbReference>
<dbReference type="InterPro" id="IPR018378">
    <property type="entry name" value="C-type_lectin_CS"/>
</dbReference>
<dbReference type="InterPro" id="IPR016187">
    <property type="entry name" value="CTDL_fold"/>
</dbReference>
<dbReference type="PANTHER" id="PTHR22803">
    <property type="entry name" value="MANNOSE, PHOSPHOLIPASE, LECTIN RECEPTOR RELATED"/>
    <property type="match status" value="1"/>
</dbReference>
<dbReference type="Pfam" id="PF00059">
    <property type="entry name" value="Lectin_C"/>
    <property type="match status" value="1"/>
</dbReference>
<dbReference type="PRINTS" id="PR00356">
    <property type="entry name" value="ANTIFREEZEII"/>
</dbReference>
<dbReference type="SMART" id="SM00034">
    <property type="entry name" value="CLECT"/>
    <property type="match status" value="1"/>
</dbReference>
<dbReference type="SUPFAM" id="SSF56436">
    <property type="entry name" value="C-type lectin-like"/>
    <property type="match status" value="1"/>
</dbReference>
<dbReference type="PROSITE" id="PS00615">
    <property type="entry name" value="C_TYPE_LECTIN_1"/>
    <property type="match status" value="1"/>
</dbReference>
<dbReference type="PROSITE" id="PS50041">
    <property type="entry name" value="C_TYPE_LECTIN_2"/>
    <property type="match status" value="1"/>
</dbReference>
<evidence type="ECO:0000250" key="1">
    <source>
        <dbReference type="UniProtKB" id="P05140"/>
    </source>
</evidence>
<evidence type="ECO:0000255" key="2"/>
<evidence type="ECO:0000255" key="3">
    <source>
        <dbReference type="PROSITE-ProRule" id="PRU00040"/>
    </source>
</evidence>
<evidence type="ECO:0000269" key="4">
    <source>
    </source>
</evidence>
<evidence type="ECO:0000269" key="5">
    <source>
    </source>
</evidence>
<evidence type="ECO:0000303" key="6">
    <source>
    </source>
</evidence>
<evidence type="ECO:0000305" key="7"/>
<evidence type="ECO:0000305" key="8">
    <source>
    </source>
</evidence>
<evidence type="ECO:0000312" key="9">
    <source>
        <dbReference type="EMBL" id="BAF37106.1"/>
    </source>
</evidence>
<evidence type="ECO:0007744" key="10">
    <source>
        <dbReference type="PDB" id="2ZIB"/>
    </source>
</evidence>
<evidence type="ECO:0007829" key="11">
    <source>
        <dbReference type="PDB" id="2ZIB"/>
    </source>
</evidence>
<keyword id="KW-0002">3D-structure</keyword>
<keyword id="KW-0047">Antifreeze protein</keyword>
<keyword id="KW-1015">Disulfide bond</keyword>
<keyword id="KW-0430">Lectin</keyword>
<keyword id="KW-0964">Secreted</keyword>
<keyword id="KW-0732">Signal</keyword>
<sequence>MLTVSLLVCAMMALTQADHDGVLKGTATEAGEVSPVFRSRRALVCPAGWTLHGQRCFYSEATAMTWDLAEANCVNKGGHLASIHSLEEQLYIKDIVAGIVWIGGSACKVAGAWSWTDGTPVDYRTWCPTKPNDILSDCCMQMTAAVDKCWDDLPCPASHASICAKAAI</sequence>
<comment type="function">
    <text evidence="5 8">Has antifreeze activity to protect fish blood from freezing at subzero sea water temperatures (Probable). Binds to ice crystals and inhibits their growth. The thermal hysteresis (TH) activity, the ability to lower the blood freezing point, is approximately 0.45 degrees Celsius at 0.15 mM for this protein (PubMed:18674542).</text>
</comment>
<comment type="subcellular location">
    <subcellularLocation>
        <location evidence="4">Secreted</location>
    </subcellularLocation>
</comment>
<feature type="signal peptide" evidence="2">
    <location>
        <begin position="1"/>
        <end position="17"/>
    </location>
</feature>
<feature type="propeptide" id="PRO_0000445011" evidence="1">
    <location>
        <begin position="18"/>
        <end position="34"/>
    </location>
</feature>
<feature type="chain" id="PRO_5002631706" description="Type-2 ice-structuring protein" evidence="1">
    <location>
        <begin position="35"/>
        <end position="168"/>
    </location>
</feature>
<feature type="domain" description="C-type lectin" evidence="3">
    <location>
        <begin position="52"/>
        <end position="164"/>
    </location>
</feature>
<feature type="disulfide bond" evidence="5 10">
    <location>
        <begin position="45"/>
        <end position="56"/>
    </location>
</feature>
<feature type="disulfide bond" evidence="3 5 10">
    <location>
        <begin position="73"/>
        <end position="163"/>
    </location>
</feature>
<feature type="disulfide bond" evidence="5 10">
    <location>
        <begin position="107"/>
        <end position="138"/>
    </location>
</feature>
<feature type="disulfide bond" evidence="5 10">
    <location>
        <begin position="127"/>
        <end position="149"/>
    </location>
</feature>
<feature type="disulfide bond" evidence="3 5 10">
    <location>
        <begin position="139"/>
        <end position="155"/>
    </location>
</feature>
<feature type="mutagenesis site" description="Has 60% thermal hysteresis (TH) activity of that of the wild-type. Has 60% thermal hysteresis (TH) activity of that of the wild-type; when associated with F-112." evidence="5">
    <original>I</original>
    <variation>F</variation>
    <location>
        <position position="99"/>
    </location>
</feature>
<feature type="mutagenesis site" description="No effect on thermal hysteresis (TH) activity. Has 60% thermal hysteresis (TH) activity of that of the wild-type; when associated with F-99." evidence="5">
    <original>A</original>
    <variation>F</variation>
    <location>
        <position position="112"/>
    </location>
</feature>
<feature type="mutagenesis site" description="Nearly identical thermal hysteresis (TH) activity with that of the wild-type." evidence="5">
    <original>L</original>
    <variation>F</variation>
    <location>
        <position position="153"/>
    </location>
</feature>
<feature type="strand" evidence="11">
    <location>
        <begin position="50"/>
        <end position="52"/>
    </location>
</feature>
<feature type="strand" evidence="11">
    <location>
        <begin position="55"/>
        <end position="64"/>
    </location>
</feature>
<feature type="helix" evidence="11">
    <location>
        <begin position="66"/>
        <end position="75"/>
    </location>
</feature>
<feature type="strand" evidence="11">
    <location>
        <begin position="78"/>
        <end position="80"/>
    </location>
</feature>
<feature type="helix" evidence="11">
    <location>
        <begin position="86"/>
        <end position="95"/>
    </location>
</feature>
<feature type="strand" evidence="11">
    <location>
        <begin position="100"/>
        <end position="105"/>
    </location>
</feature>
<feature type="strand" evidence="11">
    <location>
        <begin position="139"/>
        <end position="142"/>
    </location>
</feature>
<feature type="strand" evidence="11">
    <location>
        <begin position="150"/>
        <end position="153"/>
    </location>
</feature>
<feature type="strand" evidence="11">
    <location>
        <begin position="159"/>
        <end position="166"/>
    </location>
</feature>